<gene>
    <name type="ordered locus">GTNG_0912</name>
</gene>
<keyword id="KW-0028">Amino-acid biosynthesis</keyword>
<keyword id="KW-0220">Diaminopimelate biosynthesis</keyword>
<keyword id="KW-0378">Hydrolase</keyword>
<keyword id="KW-0457">Lysine biosynthesis</keyword>
<dbReference type="EC" id="3.5.1.47" evidence="1"/>
<dbReference type="EMBL" id="CP000557">
    <property type="protein sequence ID" value="ABO66290.1"/>
    <property type="molecule type" value="Genomic_DNA"/>
</dbReference>
<dbReference type="RefSeq" id="WP_008878760.1">
    <property type="nucleotide sequence ID" value="NC_009328.1"/>
</dbReference>
<dbReference type="SMR" id="A4ILT6"/>
<dbReference type="MEROPS" id="M20.A27"/>
<dbReference type="KEGG" id="gtn:GTNG_0912"/>
<dbReference type="eggNOG" id="COG1473">
    <property type="taxonomic scope" value="Bacteria"/>
</dbReference>
<dbReference type="HOGENOM" id="CLU_023257_0_1_9"/>
<dbReference type="UniPathway" id="UPA00034">
    <property type="reaction ID" value="UER00024"/>
</dbReference>
<dbReference type="Proteomes" id="UP000001578">
    <property type="component" value="Chromosome"/>
</dbReference>
<dbReference type="GO" id="GO:0050118">
    <property type="term" value="F:N-acetyldiaminopimelate deacetylase activity"/>
    <property type="evidence" value="ECO:0007669"/>
    <property type="project" value="UniProtKB-UniRule"/>
</dbReference>
<dbReference type="GO" id="GO:0019877">
    <property type="term" value="P:diaminopimelate biosynthetic process"/>
    <property type="evidence" value="ECO:0007669"/>
    <property type="project" value="UniProtKB-UniRule"/>
</dbReference>
<dbReference type="GO" id="GO:0009089">
    <property type="term" value="P:lysine biosynthetic process via diaminopimelate"/>
    <property type="evidence" value="ECO:0007669"/>
    <property type="project" value="UniProtKB-UniRule"/>
</dbReference>
<dbReference type="CDD" id="cd05670">
    <property type="entry name" value="M20_Acy1_YkuR-like"/>
    <property type="match status" value="1"/>
</dbReference>
<dbReference type="FunFam" id="3.30.70.360:FF:000001">
    <property type="entry name" value="N-acetyldiaminopimelate deacetylase"/>
    <property type="match status" value="1"/>
</dbReference>
<dbReference type="Gene3D" id="3.30.70.360">
    <property type="match status" value="1"/>
</dbReference>
<dbReference type="Gene3D" id="3.40.630.10">
    <property type="entry name" value="Zn peptidases"/>
    <property type="match status" value="1"/>
</dbReference>
<dbReference type="HAMAP" id="MF_01692">
    <property type="entry name" value="DapEL"/>
    <property type="match status" value="1"/>
</dbReference>
<dbReference type="InterPro" id="IPR023905">
    <property type="entry name" value="AcetylDAP_deacetylase"/>
</dbReference>
<dbReference type="InterPro" id="IPR017439">
    <property type="entry name" value="Amidohydrolase"/>
</dbReference>
<dbReference type="InterPro" id="IPR036264">
    <property type="entry name" value="Bact_exopeptidase_dim_dom"/>
</dbReference>
<dbReference type="InterPro" id="IPR002933">
    <property type="entry name" value="Peptidase_M20"/>
</dbReference>
<dbReference type="InterPro" id="IPR011650">
    <property type="entry name" value="Peptidase_M20_dimer"/>
</dbReference>
<dbReference type="NCBIfam" id="TIGR01891">
    <property type="entry name" value="amidohydrolases"/>
    <property type="match status" value="1"/>
</dbReference>
<dbReference type="PANTHER" id="PTHR11014:SF98">
    <property type="entry name" value="N-ACETYLDIAMINOPIMELATE DEACETYLASE"/>
    <property type="match status" value="1"/>
</dbReference>
<dbReference type="PANTHER" id="PTHR11014">
    <property type="entry name" value="PEPTIDASE M20 FAMILY MEMBER"/>
    <property type="match status" value="1"/>
</dbReference>
<dbReference type="Pfam" id="PF07687">
    <property type="entry name" value="M20_dimer"/>
    <property type="match status" value="1"/>
</dbReference>
<dbReference type="Pfam" id="PF01546">
    <property type="entry name" value="Peptidase_M20"/>
    <property type="match status" value="1"/>
</dbReference>
<dbReference type="PIRSF" id="PIRSF005962">
    <property type="entry name" value="Pept_M20D_amidohydro"/>
    <property type="match status" value="1"/>
</dbReference>
<dbReference type="SUPFAM" id="SSF55031">
    <property type="entry name" value="Bacterial exopeptidase dimerisation domain"/>
    <property type="match status" value="1"/>
</dbReference>
<dbReference type="SUPFAM" id="SSF53187">
    <property type="entry name" value="Zn-dependent exopeptidases"/>
    <property type="match status" value="1"/>
</dbReference>
<sequence length="377" mass="41870">METISPFVAIRRDLHKIPELGFQEFKTQQYLLNYIQSLPQERLDVRTWKTGIFVKVSGTAPRKTIGYRADIDGLPISEETGLPYRSEHAGQMHACGHDVHMSIALGVLTHFAHNPIRDDLLFIFQPAEEGPGGAKPMLESDIMREWKPDMIVALHIAPEYPVGTIATKEGLLFANTSELFIDLKGKGGHAAFPHLANDMVVAACALVTQLQSIVARNVDPLDSAVITIGKITSGTVQNVIAEHARLEGTIRTLSIDAMQAVKRRIEALVRGVEVAYECEAVIDYGAMYHEVYNNPALTTEFIQFAETHTDMNVIRCKEAMTGEDFGYMLAEIPGFMFWLGVDSPYGLHHAKLVPNEAAIDRAIAFLISYFSWKGNME</sequence>
<comment type="function">
    <text evidence="1">Catalyzes the conversion of N-acetyl-diaminopimelate to diaminopimelate and acetate.</text>
</comment>
<comment type="catalytic activity">
    <reaction evidence="1">
        <text>N-acetyl-(2S,6S)-2,6-diaminopimelate + H2O = (2S,6S)-2,6-diaminopimelate + acetate</text>
        <dbReference type="Rhea" id="RHEA:20405"/>
        <dbReference type="ChEBI" id="CHEBI:15377"/>
        <dbReference type="ChEBI" id="CHEBI:30089"/>
        <dbReference type="ChEBI" id="CHEBI:57609"/>
        <dbReference type="ChEBI" id="CHEBI:58767"/>
        <dbReference type="EC" id="3.5.1.47"/>
    </reaction>
</comment>
<comment type="pathway">
    <text evidence="1">Amino-acid biosynthesis; L-lysine biosynthesis via DAP pathway; LL-2,6-diaminopimelate from (S)-tetrahydrodipicolinate (acetylase route): step 3/3.</text>
</comment>
<comment type="similarity">
    <text evidence="1">Belongs to the peptidase M20A family. N-acetyldiaminopimelate deacetylase subfamily.</text>
</comment>
<protein>
    <recommendedName>
        <fullName evidence="1">N-acetyldiaminopimelate deacetylase</fullName>
        <ecNumber evidence="1">3.5.1.47</ecNumber>
    </recommendedName>
</protein>
<organism>
    <name type="scientific">Geobacillus thermodenitrificans (strain NG80-2)</name>
    <dbReference type="NCBI Taxonomy" id="420246"/>
    <lineage>
        <taxon>Bacteria</taxon>
        <taxon>Bacillati</taxon>
        <taxon>Bacillota</taxon>
        <taxon>Bacilli</taxon>
        <taxon>Bacillales</taxon>
        <taxon>Anoxybacillaceae</taxon>
        <taxon>Geobacillus</taxon>
    </lineage>
</organism>
<accession>A4ILT6</accession>
<reference key="1">
    <citation type="journal article" date="2007" name="Proc. Natl. Acad. Sci. U.S.A.">
        <title>Genome and proteome of long-chain alkane degrading Geobacillus thermodenitrificans NG80-2 isolated from a deep-subsurface oil reservoir.</title>
        <authorList>
            <person name="Feng L."/>
            <person name="Wang W."/>
            <person name="Cheng J."/>
            <person name="Ren Y."/>
            <person name="Zhao G."/>
            <person name="Gao C."/>
            <person name="Tang Y."/>
            <person name="Liu X."/>
            <person name="Han W."/>
            <person name="Peng X."/>
            <person name="Liu R."/>
            <person name="Wang L."/>
        </authorList>
    </citation>
    <scope>NUCLEOTIDE SEQUENCE [LARGE SCALE GENOMIC DNA]</scope>
    <source>
        <strain>NG80-2</strain>
    </source>
</reference>
<name>DAPEL_GEOTN</name>
<proteinExistence type="inferred from homology"/>
<evidence type="ECO:0000255" key="1">
    <source>
        <dbReference type="HAMAP-Rule" id="MF_01692"/>
    </source>
</evidence>
<feature type="chain" id="PRO_0000376756" description="N-acetyldiaminopimelate deacetylase">
    <location>
        <begin position="1"/>
        <end position="377"/>
    </location>
</feature>
<feature type="active site" evidence="1">
    <location>
        <position position="70"/>
    </location>
</feature>
<feature type="active site" description="Proton acceptor" evidence="1">
    <location>
        <position position="129"/>
    </location>
</feature>